<keyword id="KW-0067">ATP-binding</keyword>
<keyword id="KW-0963">Cytoplasm</keyword>
<keyword id="KW-0275">Fatty acid biosynthesis</keyword>
<keyword id="KW-0276">Fatty acid metabolism</keyword>
<keyword id="KW-0444">Lipid biosynthesis</keyword>
<keyword id="KW-0443">Lipid metabolism</keyword>
<keyword id="KW-0547">Nucleotide-binding</keyword>
<keyword id="KW-1185">Reference proteome</keyword>
<keyword id="KW-0808">Transferase</keyword>
<proteinExistence type="inferred from homology"/>
<evidence type="ECO:0000255" key="1">
    <source>
        <dbReference type="HAMAP-Rule" id="MF_00823"/>
    </source>
</evidence>
<evidence type="ECO:0000255" key="2">
    <source>
        <dbReference type="PROSITE-ProRule" id="PRU01137"/>
    </source>
</evidence>
<sequence length="322" mass="35460">MKTTFLEFEQPIAELEAKIEELRFVQDDSAVDISEEISRLAAKSQQLTKDLYATLSPWQVAQIARHPQRPYTLDYVREIFTDFHELHGDRTFADDLSIVGGLARFNGQPCMVIGHQKGRDTKERALRNFGMSKPEGYRKAKRLMELADKFGLPIFTFVDTPGAFPGIEAEERGQSEAIGHNLFVMAGLKVPLIATIIGEGGSGGALAIAVGDSVIMLQFATYAVISPEGCASILWKTAEKAPEAAEALGLTAHRLKALGLIDKIVNEPLGGAHRDPKAMATMLKRALAESLRQFQGMKTSELQARRHERLMAYGKFKETGSN</sequence>
<feature type="chain" id="PRO_0000223814" description="Acetyl-coenzyme A carboxylase carboxyl transferase subunit alpha">
    <location>
        <begin position="1"/>
        <end position="322"/>
    </location>
</feature>
<feature type="domain" description="CoA carboxyltransferase C-terminal" evidence="2">
    <location>
        <begin position="39"/>
        <end position="293"/>
    </location>
</feature>
<accession>Q8Y075</accession>
<organism>
    <name type="scientific">Ralstonia nicotianae (strain ATCC BAA-1114 / GMI1000)</name>
    <name type="common">Ralstonia solanacearum</name>
    <dbReference type="NCBI Taxonomy" id="267608"/>
    <lineage>
        <taxon>Bacteria</taxon>
        <taxon>Pseudomonadati</taxon>
        <taxon>Pseudomonadota</taxon>
        <taxon>Betaproteobacteria</taxon>
        <taxon>Burkholderiales</taxon>
        <taxon>Burkholderiaceae</taxon>
        <taxon>Ralstonia</taxon>
        <taxon>Ralstonia solanacearum species complex</taxon>
    </lineage>
</organism>
<comment type="function">
    <text evidence="1">Component of the acetyl coenzyme A carboxylase (ACC) complex. First, biotin carboxylase catalyzes the carboxylation of biotin on its carrier protein (BCCP) and then the CO(2) group is transferred by the carboxyltransferase to acetyl-CoA to form malonyl-CoA.</text>
</comment>
<comment type="catalytic activity">
    <reaction evidence="1">
        <text>N(6)-carboxybiotinyl-L-lysyl-[protein] + acetyl-CoA = N(6)-biotinyl-L-lysyl-[protein] + malonyl-CoA</text>
        <dbReference type="Rhea" id="RHEA:54728"/>
        <dbReference type="Rhea" id="RHEA-COMP:10505"/>
        <dbReference type="Rhea" id="RHEA-COMP:10506"/>
        <dbReference type="ChEBI" id="CHEBI:57288"/>
        <dbReference type="ChEBI" id="CHEBI:57384"/>
        <dbReference type="ChEBI" id="CHEBI:83144"/>
        <dbReference type="ChEBI" id="CHEBI:83145"/>
        <dbReference type="EC" id="2.1.3.15"/>
    </reaction>
</comment>
<comment type="pathway">
    <text evidence="1">Lipid metabolism; malonyl-CoA biosynthesis; malonyl-CoA from acetyl-CoA: step 1/1.</text>
</comment>
<comment type="subunit">
    <text evidence="1">Acetyl-CoA carboxylase is a heterohexamer composed of biotin carboxyl carrier protein (AccB), biotin carboxylase (AccC) and two subunits each of ACCase subunit alpha (AccA) and ACCase subunit beta (AccD).</text>
</comment>
<comment type="subcellular location">
    <subcellularLocation>
        <location evidence="1">Cytoplasm</location>
    </subcellularLocation>
</comment>
<comment type="similarity">
    <text evidence="1">Belongs to the AccA family.</text>
</comment>
<protein>
    <recommendedName>
        <fullName evidence="1">Acetyl-coenzyme A carboxylase carboxyl transferase subunit alpha</fullName>
        <shortName evidence="1">ACCase subunit alpha</shortName>
        <shortName evidence="1">Acetyl-CoA carboxylase carboxyltransferase subunit alpha</shortName>
        <ecNumber evidence="1">2.1.3.15</ecNumber>
    </recommendedName>
</protein>
<reference key="1">
    <citation type="journal article" date="2002" name="Nature">
        <title>Genome sequence of the plant pathogen Ralstonia solanacearum.</title>
        <authorList>
            <person name="Salanoubat M."/>
            <person name="Genin S."/>
            <person name="Artiguenave F."/>
            <person name="Gouzy J."/>
            <person name="Mangenot S."/>
            <person name="Arlat M."/>
            <person name="Billault A."/>
            <person name="Brottier P."/>
            <person name="Camus J.-C."/>
            <person name="Cattolico L."/>
            <person name="Chandler M."/>
            <person name="Choisne N."/>
            <person name="Claudel-Renard C."/>
            <person name="Cunnac S."/>
            <person name="Demange N."/>
            <person name="Gaspin C."/>
            <person name="Lavie M."/>
            <person name="Moisan A."/>
            <person name="Robert C."/>
            <person name="Saurin W."/>
            <person name="Schiex T."/>
            <person name="Siguier P."/>
            <person name="Thebault P."/>
            <person name="Whalen M."/>
            <person name="Wincker P."/>
            <person name="Levy M."/>
            <person name="Weissenbach J."/>
            <person name="Boucher C.A."/>
        </authorList>
    </citation>
    <scope>NUCLEOTIDE SEQUENCE [LARGE SCALE GENOMIC DNA]</scope>
    <source>
        <strain>ATCC BAA-1114 / GMI1000</strain>
    </source>
</reference>
<dbReference type="EC" id="2.1.3.15" evidence="1"/>
<dbReference type="EMBL" id="AL646052">
    <property type="protein sequence ID" value="CAD14871.1"/>
    <property type="molecule type" value="Genomic_DNA"/>
</dbReference>
<dbReference type="RefSeq" id="WP_011001119.1">
    <property type="nucleotide sequence ID" value="NC_003295.1"/>
</dbReference>
<dbReference type="SMR" id="Q8Y075"/>
<dbReference type="STRING" id="267608.RSc1169"/>
<dbReference type="DNASU" id="1219984"/>
<dbReference type="EnsemblBacteria" id="CAD14871">
    <property type="protein sequence ID" value="CAD14871"/>
    <property type="gene ID" value="RSc1169"/>
</dbReference>
<dbReference type="KEGG" id="rso:RSc1169"/>
<dbReference type="eggNOG" id="COG0825">
    <property type="taxonomic scope" value="Bacteria"/>
</dbReference>
<dbReference type="HOGENOM" id="CLU_015486_0_2_4"/>
<dbReference type="UniPathway" id="UPA00655">
    <property type="reaction ID" value="UER00711"/>
</dbReference>
<dbReference type="Proteomes" id="UP000001436">
    <property type="component" value="Chromosome"/>
</dbReference>
<dbReference type="GO" id="GO:0009317">
    <property type="term" value="C:acetyl-CoA carboxylase complex"/>
    <property type="evidence" value="ECO:0007669"/>
    <property type="project" value="InterPro"/>
</dbReference>
<dbReference type="GO" id="GO:0003989">
    <property type="term" value="F:acetyl-CoA carboxylase activity"/>
    <property type="evidence" value="ECO:0007669"/>
    <property type="project" value="InterPro"/>
</dbReference>
<dbReference type="GO" id="GO:0005524">
    <property type="term" value="F:ATP binding"/>
    <property type="evidence" value="ECO:0007669"/>
    <property type="project" value="UniProtKB-KW"/>
</dbReference>
<dbReference type="GO" id="GO:0016743">
    <property type="term" value="F:carboxyl- or carbamoyltransferase activity"/>
    <property type="evidence" value="ECO:0007669"/>
    <property type="project" value="UniProtKB-UniRule"/>
</dbReference>
<dbReference type="GO" id="GO:0006633">
    <property type="term" value="P:fatty acid biosynthetic process"/>
    <property type="evidence" value="ECO:0007669"/>
    <property type="project" value="UniProtKB-KW"/>
</dbReference>
<dbReference type="GO" id="GO:2001295">
    <property type="term" value="P:malonyl-CoA biosynthetic process"/>
    <property type="evidence" value="ECO:0007669"/>
    <property type="project" value="UniProtKB-UniRule"/>
</dbReference>
<dbReference type="Gene3D" id="3.90.226.10">
    <property type="entry name" value="2-enoyl-CoA Hydratase, Chain A, domain 1"/>
    <property type="match status" value="1"/>
</dbReference>
<dbReference type="HAMAP" id="MF_00823">
    <property type="entry name" value="AcetylCoA_CT_alpha"/>
    <property type="match status" value="1"/>
</dbReference>
<dbReference type="InterPro" id="IPR001095">
    <property type="entry name" value="Acetyl_CoA_COase_a_su"/>
</dbReference>
<dbReference type="InterPro" id="IPR029045">
    <property type="entry name" value="ClpP/crotonase-like_dom_sf"/>
</dbReference>
<dbReference type="InterPro" id="IPR011763">
    <property type="entry name" value="COA_CT_C"/>
</dbReference>
<dbReference type="NCBIfam" id="TIGR00513">
    <property type="entry name" value="accA"/>
    <property type="match status" value="1"/>
</dbReference>
<dbReference type="NCBIfam" id="NF041504">
    <property type="entry name" value="AccA_sub"/>
    <property type="match status" value="1"/>
</dbReference>
<dbReference type="NCBIfam" id="NF004344">
    <property type="entry name" value="PRK05724.1"/>
    <property type="match status" value="1"/>
</dbReference>
<dbReference type="PANTHER" id="PTHR42853">
    <property type="entry name" value="ACETYL-COENZYME A CARBOXYLASE CARBOXYL TRANSFERASE SUBUNIT ALPHA"/>
    <property type="match status" value="1"/>
</dbReference>
<dbReference type="PANTHER" id="PTHR42853:SF3">
    <property type="entry name" value="ACETYL-COENZYME A CARBOXYLASE CARBOXYL TRANSFERASE SUBUNIT ALPHA, CHLOROPLASTIC"/>
    <property type="match status" value="1"/>
</dbReference>
<dbReference type="Pfam" id="PF03255">
    <property type="entry name" value="ACCA"/>
    <property type="match status" value="1"/>
</dbReference>
<dbReference type="PRINTS" id="PR01069">
    <property type="entry name" value="ACCCTRFRASEA"/>
</dbReference>
<dbReference type="SUPFAM" id="SSF52096">
    <property type="entry name" value="ClpP/crotonase"/>
    <property type="match status" value="1"/>
</dbReference>
<dbReference type="PROSITE" id="PS50989">
    <property type="entry name" value="COA_CT_CTER"/>
    <property type="match status" value="1"/>
</dbReference>
<name>ACCA_RALN1</name>
<gene>
    <name evidence="1" type="primary">accA</name>
    <name type="ordered locus">RSc1169</name>
    <name type="ORF">RS04560</name>
</gene>